<feature type="chain" id="PRO_0000111170" description="Small ribosomal subunit protein bS18">
    <location>
        <begin position="1"/>
        <end position="81"/>
    </location>
</feature>
<evidence type="ECO:0000255" key="1">
    <source>
        <dbReference type="HAMAP-Rule" id="MF_00270"/>
    </source>
</evidence>
<evidence type="ECO:0000305" key="2"/>
<keyword id="KW-1185">Reference proteome</keyword>
<keyword id="KW-0687">Ribonucleoprotein</keyword>
<keyword id="KW-0689">Ribosomal protein</keyword>
<keyword id="KW-0694">RNA-binding</keyword>
<keyword id="KW-0699">rRNA-binding</keyword>
<proteinExistence type="inferred from homology"/>
<reference key="1">
    <citation type="journal article" date="2003" name="Nature">
        <title>Unique physiological and pathogenic features of Leptospira interrogans revealed by whole-genome sequencing.</title>
        <authorList>
            <person name="Ren S.-X."/>
            <person name="Fu G."/>
            <person name="Jiang X.-G."/>
            <person name="Zeng R."/>
            <person name="Miao Y.-G."/>
            <person name="Xu H."/>
            <person name="Zhang Y.-X."/>
            <person name="Xiong H."/>
            <person name="Lu G."/>
            <person name="Lu L.-F."/>
            <person name="Jiang H.-Q."/>
            <person name="Jia J."/>
            <person name="Tu Y.-F."/>
            <person name="Jiang J.-X."/>
            <person name="Gu W.-Y."/>
            <person name="Zhang Y.-Q."/>
            <person name="Cai Z."/>
            <person name="Sheng H.-H."/>
            <person name="Yin H.-F."/>
            <person name="Zhang Y."/>
            <person name="Zhu G.-F."/>
            <person name="Wan M."/>
            <person name="Huang H.-L."/>
            <person name="Qian Z."/>
            <person name="Wang S.-Y."/>
            <person name="Ma W."/>
            <person name="Yao Z.-J."/>
            <person name="Shen Y."/>
            <person name="Qiang B.-Q."/>
            <person name="Xia Q.-C."/>
            <person name="Guo X.-K."/>
            <person name="Danchin A."/>
            <person name="Saint Girons I."/>
            <person name="Somerville R.L."/>
            <person name="Wen Y.-M."/>
            <person name="Shi M.-H."/>
            <person name="Chen Z."/>
            <person name="Xu J.-G."/>
            <person name="Zhao G.-P."/>
        </authorList>
    </citation>
    <scope>NUCLEOTIDE SEQUENCE [LARGE SCALE GENOMIC DNA]</scope>
    <source>
        <strain>56601</strain>
    </source>
</reference>
<protein>
    <recommendedName>
        <fullName evidence="1">Small ribosomal subunit protein bS18</fullName>
    </recommendedName>
    <alternativeName>
        <fullName evidence="2">30S ribosomal protein S18</fullName>
    </alternativeName>
</protein>
<comment type="function">
    <text evidence="1">Binds as a heterodimer with protein bS6 to the central domain of the 16S rRNA, where it helps stabilize the platform of the 30S subunit.</text>
</comment>
<comment type="subunit">
    <text evidence="1">Part of the 30S ribosomal subunit. Forms a tight heterodimer with protein bS6.</text>
</comment>
<comment type="similarity">
    <text evidence="1">Belongs to the bacterial ribosomal protein bS18 family.</text>
</comment>
<comment type="sequence caution" evidence="2">
    <conflict type="erroneous initiation">
        <sequence resource="EMBL-CDS" id="AAN48876"/>
    </conflict>
</comment>
<sequence length="81" mass="9603">MEGKPQRKQNKYKKKVCRFTADPELAKQINYKNIELLERFITNRGKIIPRRITGTSARYQRVLAREIRKARSIGLLPYKVN</sequence>
<accession>Q8F5K4</accession>
<organism>
    <name type="scientific">Leptospira interrogans serogroup Icterohaemorrhagiae serovar Lai (strain 56601)</name>
    <dbReference type="NCBI Taxonomy" id="189518"/>
    <lineage>
        <taxon>Bacteria</taxon>
        <taxon>Pseudomonadati</taxon>
        <taxon>Spirochaetota</taxon>
        <taxon>Spirochaetia</taxon>
        <taxon>Leptospirales</taxon>
        <taxon>Leptospiraceae</taxon>
        <taxon>Leptospira</taxon>
    </lineage>
</organism>
<name>RS18_LEPIN</name>
<gene>
    <name evidence="1" type="primary">rpsR</name>
    <name type="ordered locus">LA_1677</name>
</gene>
<dbReference type="EMBL" id="AE010300">
    <property type="protein sequence ID" value="AAN48876.1"/>
    <property type="status" value="ALT_INIT"/>
    <property type="molecule type" value="Genomic_DNA"/>
</dbReference>
<dbReference type="RefSeq" id="NP_711858.1">
    <property type="nucleotide sequence ID" value="NC_004342.2"/>
</dbReference>
<dbReference type="SMR" id="Q8F5K4"/>
<dbReference type="FunCoup" id="Q8F5K4">
    <property type="interactions" value="510"/>
</dbReference>
<dbReference type="STRING" id="189518.LA_1677"/>
<dbReference type="PaxDb" id="189518-LA_1677"/>
<dbReference type="EnsemblBacteria" id="AAN48876">
    <property type="protein sequence ID" value="AAN48876"/>
    <property type="gene ID" value="LA_1677"/>
</dbReference>
<dbReference type="KEGG" id="lil:LA_1677"/>
<dbReference type="PATRIC" id="fig|189518.3.peg.1671"/>
<dbReference type="HOGENOM" id="CLU_148710_0_2_12"/>
<dbReference type="InParanoid" id="Q8F5K4"/>
<dbReference type="OrthoDB" id="9812008at2"/>
<dbReference type="Proteomes" id="UP000001408">
    <property type="component" value="Chromosome I"/>
</dbReference>
<dbReference type="GO" id="GO:0022627">
    <property type="term" value="C:cytosolic small ribosomal subunit"/>
    <property type="evidence" value="ECO:0000318"/>
    <property type="project" value="GO_Central"/>
</dbReference>
<dbReference type="GO" id="GO:0070181">
    <property type="term" value="F:small ribosomal subunit rRNA binding"/>
    <property type="evidence" value="ECO:0000318"/>
    <property type="project" value="GO_Central"/>
</dbReference>
<dbReference type="GO" id="GO:0003735">
    <property type="term" value="F:structural constituent of ribosome"/>
    <property type="evidence" value="ECO:0000318"/>
    <property type="project" value="GO_Central"/>
</dbReference>
<dbReference type="GO" id="GO:0006412">
    <property type="term" value="P:translation"/>
    <property type="evidence" value="ECO:0000318"/>
    <property type="project" value="GO_Central"/>
</dbReference>
<dbReference type="FunFam" id="4.10.640.10:FF:000014">
    <property type="entry name" value="30S ribosomal protein S18"/>
    <property type="match status" value="1"/>
</dbReference>
<dbReference type="Gene3D" id="4.10.640.10">
    <property type="entry name" value="Ribosomal protein S18"/>
    <property type="match status" value="1"/>
</dbReference>
<dbReference type="HAMAP" id="MF_00270">
    <property type="entry name" value="Ribosomal_bS18"/>
    <property type="match status" value="1"/>
</dbReference>
<dbReference type="InterPro" id="IPR001648">
    <property type="entry name" value="Ribosomal_bS18"/>
</dbReference>
<dbReference type="InterPro" id="IPR018275">
    <property type="entry name" value="Ribosomal_bS18_CS"/>
</dbReference>
<dbReference type="InterPro" id="IPR036870">
    <property type="entry name" value="Ribosomal_bS18_sf"/>
</dbReference>
<dbReference type="NCBIfam" id="TIGR00165">
    <property type="entry name" value="S18"/>
    <property type="match status" value="1"/>
</dbReference>
<dbReference type="PANTHER" id="PTHR13479">
    <property type="entry name" value="30S RIBOSOMAL PROTEIN S18"/>
    <property type="match status" value="1"/>
</dbReference>
<dbReference type="PANTHER" id="PTHR13479:SF40">
    <property type="entry name" value="SMALL RIBOSOMAL SUBUNIT PROTEIN BS18M"/>
    <property type="match status" value="1"/>
</dbReference>
<dbReference type="Pfam" id="PF01084">
    <property type="entry name" value="Ribosomal_S18"/>
    <property type="match status" value="1"/>
</dbReference>
<dbReference type="PRINTS" id="PR00974">
    <property type="entry name" value="RIBOSOMALS18"/>
</dbReference>
<dbReference type="SUPFAM" id="SSF46911">
    <property type="entry name" value="Ribosomal protein S18"/>
    <property type="match status" value="1"/>
</dbReference>
<dbReference type="PROSITE" id="PS00057">
    <property type="entry name" value="RIBOSOMAL_S18"/>
    <property type="match status" value="1"/>
</dbReference>